<name>ALMA2_EMIHU</name>
<sequence length="353" mass="37891">MGSASSKTRKDKAKSSTIAACPTDTAAAKACPTRLDDGLAQVAMFAGLRQVTMGVLRIDYDYQTNLGDILDPRSFDFRLVSATVEGLTFKRAQEGEPLPCYVMSNLDGAVKKLIDAGADFIVGDCGFLVYWQVYVRDFAQQYAGGRACPVMLSSLVLSLPLLATIPVGGKIGILTASKGSLMKMQKKLASVIELQKEEARTRAVPAAVQPSGIEINFSDPRFKVVGLDTVNSFKTALADDSGVDDRRSIAIEIAKYCKQVACEDPAICAWLIECTEAGGFSWAIKLGTGLPVWDPVTIGRFLSLGFTSSLPSVALTLGETGQVALDPNETDVSKGRPTKAEHRFGPEFEEMLQ</sequence>
<comment type="function">
    <text evidence="3">Mediates cleavage of dimethylsulfoniopropionate (DMSP) into dimethyl sulfide (DMS) and acrylate. DMS is the principal form by which sulfur is transported from oceans to the atmosphere and is a key component of the ocean sulfur cycle.</text>
</comment>
<comment type="catalytic activity">
    <reaction evidence="1">
        <text>S,S-dimethyl-beta-propiothetin = acrylate + dimethyl sulfide + H(+)</text>
        <dbReference type="Rhea" id="RHEA:19965"/>
        <dbReference type="ChEBI" id="CHEBI:15378"/>
        <dbReference type="ChEBI" id="CHEBI:16457"/>
        <dbReference type="ChEBI" id="CHEBI:17437"/>
        <dbReference type="ChEBI" id="CHEBI:37080"/>
        <dbReference type="EC" id="4.4.1.3"/>
    </reaction>
</comment>
<comment type="subunit">
    <text evidence="1">Homotetramer.</text>
</comment>
<comment type="induction">
    <text evidence="3">Expressed at low level.</text>
</comment>
<comment type="similarity">
    <text evidence="5">Belongs to the aspartate/glutamate racemases family. ALMA1 subfamily.</text>
</comment>
<accession>P0DN23</accession>
<reference key="1">
    <citation type="journal article" date="2015" name="Science">
        <title>Identification of the algal dimethyl sulfide-releasing enzyme: A missing link in the marine sulfur cycle.</title>
        <authorList>
            <person name="Alcolombri U."/>
            <person name="Ben-Dor S."/>
            <person name="Feldmesser E."/>
            <person name="Levin Y."/>
            <person name="Tawfik D.S."/>
            <person name="Vardi A."/>
        </authorList>
    </citation>
    <scope>NUCLEOTIDE SEQUENCE [GENOMIC DNA]</scope>
    <scope>FUNCTION</scope>
    <scope>CATALYTIC ACTIVITY</scope>
    <scope>INDUCTION</scope>
    <source>
        <strain>CCMP373 / CSIRO-CS-57 / BT6</strain>
    </source>
</reference>
<gene>
    <name evidence="4" type="primary">ALMA2</name>
</gene>
<proteinExistence type="evidence at protein level"/>
<feature type="chain" id="PRO_0000433888" description="Dimethylsulfoniopropionate lyase 2">
    <location>
        <begin position="1"/>
        <end position="353"/>
    </location>
</feature>
<feature type="region of interest" description="Disordered" evidence="2">
    <location>
        <begin position="326"/>
        <end position="353"/>
    </location>
</feature>
<feature type="compositionally biased region" description="Basic and acidic residues" evidence="2">
    <location>
        <begin position="331"/>
        <end position="346"/>
    </location>
</feature>
<feature type="active site" description="Proton donor/acceptor" evidence="1">
    <location>
        <position position="125"/>
    </location>
</feature>
<feature type="active site" description="Proton donor/acceptor" evidence="1">
    <location>
        <position position="274"/>
    </location>
</feature>
<protein>
    <recommendedName>
        <fullName evidence="5">Dimethylsulfoniopropionate lyase 2</fullName>
        <shortName evidence="5">DMSP lyase 2</shortName>
        <ecNumber evidence="3">4.4.1.3</ecNumber>
    </recommendedName>
    <alternativeName>
        <fullName evidence="5">Dimethylpropiothetin dethiomethylase 2</fullName>
    </alternativeName>
</protein>
<dbReference type="EC" id="4.4.1.3" evidence="3"/>
<dbReference type="EMBL" id="KR703621">
    <property type="protein sequence ID" value="AKO62593.1"/>
    <property type="molecule type" value="mRNA"/>
</dbReference>
<dbReference type="GO" id="GO:0047869">
    <property type="term" value="F:dimethylpropiothetin dethiomethylase activity"/>
    <property type="evidence" value="ECO:0000314"/>
    <property type="project" value="UniProtKB"/>
</dbReference>
<keyword id="KW-0456">Lyase</keyword>
<evidence type="ECO:0000250" key="1">
    <source>
        <dbReference type="UniProtKB" id="P0DN21"/>
    </source>
</evidence>
<evidence type="ECO:0000256" key="2">
    <source>
        <dbReference type="SAM" id="MobiDB-lite"/>
    </source>
</evidence>
<evidence type="ECO:0000269" key="3">
    <source>
    </source>
</evidence>
<evidence type="ECO:0000303" key="4">
    <source>
    </source>
</evidence>
<evidence type="ECO:0000305" key="5"/>
<organism>
    <name type="scientific">Emiliania huxleyi</name>
    <name type="common">Coccolithophore</name>
    <name type="synonym">Pontosphaera huxleyi</name>
    <dbReference type="NCBI Taxonomy" id="2903"/>
    <lineage>
        <taxon>Eukaryota</taxon>
        <taxon>Haptista</taxon>
        <taxon>Haptophyta</taxon>
        <taxon>Prymnesiophyceae</taxon>
        <taxon>Isochrysidales</taxon>
        <taxon>Noelaerhabdaceae</taxon>
        <taxon>Emiliania</taxon>
    </lineage>
</organism>